<reference key="1">
    <citation type="journal article" date="2003" name="Nat. Genet.">
        <title>Comparative analysis of the genome sequences of Bordetella pertussis, Bordetella parapertussis and Bordetella bronchiseptica.</title>
        <authorList>
            <person name="Parkhill J."/>
            <person name="Sebaihia M."/>
            <person name="Preston A."/>
            <person name="Murphy L.D."/>
            <person name="Thomson N.R."/>
            <person name="Harris D.E."/>
            <person name="Holden M.T.G."/>
            <person name="Churcher C.M."/>
            <person name="Bentley S.D."/>
            <person name="Mungall K.L."/>
            <person name="Cerdeno-Tarraga A.-M."/>
            <person name="Temple L."/>
            <person name="James K.D."/>
            <person name="Harris B."/>
            <person name="Quail M.A."/>
            <person name="Achtman M."/>
            <person name="Atkin R."/>
            <person name="Baker S."/>
            <person name="Basham D."/>
            <person name="Bason N."/>
            <person name="Cherevach I."/>
            <person name="Chillingworth T."/>
            <person name="Collins M."/>
            <person name="Cronin A."/>
            <person name="Davis P."/>
            <person name="Doggett J."/>
            <person name="Feltwell T."/>
            <person name="Goble A."/>
            <person name="Hamlin N."/>
            <person name="Hauser H."/>
            <person name="Holroyd S."/>
            <person name="Jagels K."/>
            <person name="Leather S."/>
            <person name="Moule S."/>
            <person name="Norberczak H."/>
            <person name="O'Neil S."/>
            <person name="Ormond D."/>
            <person name="Price C."/>
            <person name="Rabbinowitsch E."/>
            <person name="Rutter S."/>
            <person name="Sanders M."/>
            <person name="Saunders D."/>
            <person name="Seeger K."/>
            <person name="Sharp S."/>
            <person name="Simmonds M."/>
            <person name="Skelton J."/>
            <person name="Squares R."/>
            <person name="Squares S."/>
            <person name="Stevens K."/>
            <person name="Unwin L."/>
            <person name="Whitehead S."/>
            <person name="Barrell B.G."/>
            <person name="Maskell D.J."/>
        </authorList>
    </citation>
    <scope>NUCLEOTIDE SEQUENCE [LARGE SCALE GENOMIC DNA]</scope>
    <source>
        <strain>ATCC BAA-588 / NCTC 13252 / RB50</strain>
    </source>
</reference>
<organism>
    <name type="scientific">Bordetella bronchiseptica (strain ATCC BAA-588 / NCTC 13252 / RB50)</name>
    <name type="common">Alcaligenes bronchisepticus</name>
    <dbReference type="NCBI Taxonomy" id="257310"/>
    <lineage>
        <taxon>Bacteria</taxon>
        <taxon>Pseudomonadati</taxon>
        <taxon>Pseudomonadota</taxon>
        <taxon>Betaproteobacteria</taxon>
        <taxon>Burkholderiales</taxon>
        <taxon>Alcaligenaceae</taxon>
        <taxon>Bordetella</taxon>
    </lineage>
</organism>
<proteinExistence type="inferred from homology"/>
<sequence>MNDILAKILAVKAEEVATARQMRSEAELLREAQARQDVRGFAQAIEDKISQGKAGVIAEIKKASPSKGVLRENFDPAEIAASYAMHGAACLSVLTDVQFFQGSHDNLRRARAACSLPVLRKDFIIDPYQIISARAMGADCVLLIVAALAPAQLRDLETLAIDLGMDVLVEVHDAKELDAALALRTPLIGINNRNLRTFETTLQTTLDLLPMIPAGKRVVTESGILKPEDVRLMREHDVQAFLVGEAFMRANDPGVELARLVA</sequence>
<feature type="chain" id="PRO_1000018443" description="Indole-3-glycerol phosphate synthase">
    <location>
        <begin position="1"/>
        <end position="262"/>
    </location>
</feature>
<evidence type="ECO:0000255" key="1">
    <source>
        <dbReference type="HAMAP-Rule" id="MF_00134"/>
    </source>
</evidence>
<comment type="catalytic activity">
    <reaction evidence="1">
        <text>1-(2-carboxyphenylamino)-1-deoxy-D-ribulose 5-phosphate + H(+) = (1S,2R)-1-C-(indol-3-yl)glycerol 3-phosphate + CO2 + H2O</text>
        <dbReference type="Rhea" id="RHEA:23476"/>
        <dbReference type="ChEBI" id="CHEBI:15377"/>
        <dbReference type="ChEBI" id="CHEBI:15378"/>
        <dbReference type="ChEBI" id="CHEBI:16526"/>
        <dbReference type="ChEBI" id="CHEBI:58613"/>
        <dbReference type="ChEBI" id="CHEBI:58866"/>
        <dbReference type="EC" id="4.1.1.48"/>
    </reaction>
</comment>
<comment type="pathway">
    <text evidence="1">Amino-acid biosynthesis; L-tryptophan biosynthesis; L-tryptophan from chorismate: step 4/5.</text>
</comment>
<comment type="similarity">
    <text evidence="1">Belongs to the TrpC family.</text>
</comment>
<protein>
    <recommendedName>
        <fullName evidence="1">Indole-3-glycerol phosphate synthase</fullName>
        <shortName evidence="1">IGPS</shortName>
        <ecNumber evidence="1">4.1.1.48</ecNumber>
    </recommendedName>
</protein>
<gene>
    <name evidence="1" type="primary">trpC</name>
    <name type="ordered locus">BB4629</name>
</gene>
<dbReference type="EC" id="4.1.1.48" evidence="1"/>
<dbReference type="EMBL" id="BX640451">
    <property type="protein sequence ID" value="CAE34991.1"/>
    <property type="molecule type" value="Genomic_DNA"/>
</dbReference>
<dbReference type="RefSeq" id="WP_003815394.1">
    <property type="nucleotide sequence ID" value="NC_002927.3"/>
</dbReference>
<dbReference type="SMR" id="Q7WEK6"/>
<dbReference type="GeneID" id="93205955"/>
<dbReference type="KEGG" id="bbr:BB4629"/>
<dbReference type="eggNOG" id="COG0134">
    <property type="taxonomic scope" value="Bacteria"/>
</dbReference>
<dbReference type="HOGENOM" id="CLU_034247_2_0_4"/>
<dbReference type="UniPathway" id="UPA00035">
    <property type="reaction ID" value="UER00043"/>
</dbReference>
<dbReference type="Proteomes" id="UP000001027">
    <property type="component" value="Chromosome"/>
</dbReference>
<dbReference type="GO" id="GO:0004425">
    <property type="term" value="F:indole-3-glycerol-phosphate synthase activity"/>
    <property type="evidence" value="ECO:0007669"/>
    <property type="project" value="UniProtKB-UniRule"/>
</dbReference>
<dbReference type="GO" id="GO:0004640">
    <property type="term" value="F:phosphoribosylanthranilate isomerase activity"/>
    <property type="evidence" value="ECO:0007669"/>
    <property type="project" value="TreeGrafter"/>
</dbReference>
<dbReference type="GO" id="GO:0000162">
    <property type="term" value="P:L-tryptophan biosynthetic process"/>
    <property type="evidence" value="ECO:0007669"/>
    <property type="project" value="UniProtKB-UniRule"/>
</dbReference>
<dbReference type="CDD" id="cd00331">
    <property type="entry name" value="IGPS"/>
    <property type="match status" value="1"/>
</dbReference>
<dbReference type="FunFam" id="3.20.20.70:FF:000024">
    <property type="entry name" value="Indole-3-glycerol phosphate synthase"/>
    <property type="match status" value="1"/>
</dbReference>
<dbReference type="Gene3D" id="3.20.20.70">
    <property type="entry name" value="Aldolase class I"/>
    <property type="match status" value="1"/>
</dbReference>
<dbReference type="HAMAP" id="MF_00134_B">
    <property type="entry name" value="IGPS_B"/>
    <property type="match status" value="1"/>
</dbReference>
<dbReference type="InterPro" id="IPR013785">
    <property type="entry name" value="Aldolase_TIM"/>
</dbReference>
<dbReference type="InterPro" id="IPR045186">
    <property type="entry name" value="Indole-3-glycerol_P_synth"/>
</dbReference>
<dbReference type="InterPro" id="IPR013798">
    <property type="entry name" value="Indole-3-glycerol_P_synth_dom"/>
</dbReference>
<dbReference type="InterPro" id="IPR001468">
    <property type="entry name" value="Indole-3-GlycerolPSynthase_CS"/>
</dbReference>
<dbReference type="InterPro" id="IPR011060">
    <property type="entry name" value="RibuloseP-bd_barrel"/>
</dbReference>
<dbReference type="NCBIfam" id="NF001370">
    <property type="entry name" value="PRK00278.1-2"/>
    <property type="match status" value="1"/>
</dbReference>
<dbReference type="NCBIfam" id="NF001373">
    <property type="entry name" value="PRK00278.1-6"/>
    <property type="match status" value="1"/>
</dbReference>
<dbReference type="NCBIfam" id="NF001377">
    <property type="entry name" value="PRK00278.2-4"/>
    <property type="match status" value="1"/>
</dbReference>
<dbReference type="PANTHER" id="PTHR22854:SF2">
    <property type="entry name" value="INDOLE-3-GLYCEROL-PHOSPHATE SYNTHASE"/>
    <property type="match status" value="1"/>
</dbReference>
<dbReference type="PANTHER" id="PTHR22854">
    <property type="entry name" value="TRYPTOPHAN BIOSYNTHESIS PROTEIN"/>
    <property type="match status" value="1"/>
</dbReference>
<dbReference type="Pfam" id="PF00218">
    <property type="entry name" value="IGPS"/>
    <property type="match status" value="1"/>
</dbReference>
<dbReference type="SUPFAM" id="SSF51366">
    <property type="entry name" value="Ribulose-phoshate binding barrel"/>
    <property type="match status" value="1"/>
</dbReference>
<dbReference type="PROSITE" id="PS00614">
    <property type="entry name" value="IGPS"/>
    <property type="match status" value="1"/>
</dbReference>
<name>TRPC_BORBR</name>
<accession>Q7WEK6</accession>
<keyword id="KW-0028">Amino-acid biosynthesis</keyword>
<keyword id="KW-0057">Aromatic amino acid biosynthesis</keyword>
<keyword id="KW-0210">Decarboxylase</keyword>
<keyword id="KW-0456">Lyase</keyword>
<keyword id="KW-0822">Tryptophan biosynthesis</keyword>